<gene>
    <name type="ORF">ORF67</name>
</gene>
<feature type="chain" id="PRO_0000385089" description="Uncharacterized protein ORF67">
    <location>
        <begin position="1"/>
        <end position="596"/>
    </location>
</feature>
<feature type="region of interest" description="Disordered" evidence="1">
    <location>
        <begin position="1"/>
        <end position="30"/>
    </location>
</feature>
<feature type="compositionally biased region" description="Basic residues" evidence="1">
    <location>
        <begin position="1"/>
        <end position="10"/>
    </location>
</feature>
<feature type="compositionally biased region" description="Basic residues" evidence="1">
    <location>
        <begin position="18"/>
        <end position="29"/>
    </location>
</feature>
<reference key="1">
    <citation type="journal article" date="2005" name="J. Gen. Virol.">
        <title>A novel class of herpesvirus with bivalve hosts.</title>
        <authorList>
            <person name="Davison A.J."/>
            <person name="Trus B.L."/>
            <person name="Cheng N."/>
            <person name="Steven A.C."/>
            <person name="Watson M.S."/>
            <person name="Cunningham C."/>
            <person name="Le Deuff R.M."/>
            <person name="Renault T."/>
        </authorList>
    </citation>
    <scope>NUCLEOTIDE SEQUENCE [LARGE SCALE GENOMIC DNA]</scope>
</reference>
<organismHost>
    <name type="scientific">Magallana gigas</name>
    <name type="common">Pacific oyster</name>
    <name type="synonym">Crassostrea gigas</name>
    <dbReference type="NCBI Taxonomy" id="29159"/>
</organismHost>
<organismHost>
    <name type="scientific">Pecten maximus</name>
    <name type="common">King scallop</name>
    <name type="synonym">Pilgrim's clam</name>
    <dbReference type="NCBI Taxonomy" id="6579"/>
</organismHost>
<proteinExistence type="predicted"/>
<evidence type="ECO:0000256" key="1">
    <source>
        <dbReference type="SAM" id="MobiDB-lite"/>
    </source>
</evidence>
<name>Y067_OSHVF</name>
<protein>
    <recommendedName>
        <fullName>Uncharacterized protein ORF67</fullName>
    </recommendedName>
</protein>
<accession>Q6R7G1</accession>
<keyword id="KW-1185">Reference proteome</keyword>
<dbReference type="EMBL" id="AY509253">
    <property type="protein sequence ID" value="AAS00954.1"/>
    <property type="molecule type" value="Genomic_DNA"/>
</dbReference>
<dbReference type="RefSeq" id="YP_024607.1">
    <property type="nucleotide sequence ID" value="NC_005881.2"/>
</dbReference>
<dbReference type="KEGG" id="vg:2948219"/>
<dbReference type="Proteomes" id="UP000007021">
    <property type="component" value="Segment"/>
</dbReference>
<dbReference type="GO" id="GO:0005524">
    <property type="term" value="F:ATP binding"/>
    <property type="evidence" value="ECO:0007669"/>
    <property type="project" value="InterPro"/>
</dbReference>
<dbReference type="GO" id="GO:0003677">
    <property type="term" value="F:DNA binding"/>
    <property type="evidence" value="ECO:0007669"/>
    <property type="project" value="InterPro"/>
</dbReference>
<dbReference type="GO" id="GO:0016787">
    <property type="term" value="F:hydrolase activity"/>
    <property type="evidence" value="ECO:0007669"/>
    <property type="project" value="InterPro"/>
</dbReference>
<dbReference type="Gene3D" id="3.40.50.300">
    <property type="entry name" value="P-loop containing nucleotide triphosphate hydrolases"/>
    <property type="match status" value="1"/>
</dbReference>
<dbReference type="InterPro" id="IPR006935">
    <property type="entry name" value="Helicase/UvrB_N"/>
</dbReference>
<dbReference type="InterPro" id="IPR027417">
    <property type="entry name" value="P-loop_NTPase"/>
</dbReference>
<dbReference type="Pfam" id="PF04851">
    <property type="entry name" value="ResIII"/>
    <property type="match status" value="1"/>
</dbReference>
<dbReference type="SUPFAM" id="SSF52540">
    <property type="entry name" value="P-loop containing nucleoside triphosphate hydrolases"/>
    <property type="match status" value="1"/>
</dbReference>
<sequence>MRLRSQKRGNKFVALPAKTRKGKGKKLKPKNLTITKKDEVKKIKKTITPKPNNIDEDDGIGEVDDIMDITPNYQGNNDGNELDLQQTPIIPNEIKDLFMGDNWRKISGPHAVSIITKPQHRRYIALKGTMGTGKTHVTVESLNKITGSTGSILLIVGRKELANEIERRINGSCKVYNYLEKEEFSNGISLSRGGLLTERCVFIVCVNSITTDLFKEDGFKTDMIVVDEVETTFMNIVSESLMTYSAAIETRNTLVEKLFPYTNVLLTIDAALAEPMVVGCAKMFGGKFEEYKLDLVRIRPPIYHRAVQCSTAYNIIDHNPLEKRYDTLFNAITYHVYELGKRIVISVPYHKTALQLKRHILAARPQHFHKIPHVVVYTAKTRDARLARIKALQTGEQYGIEALAKEADVFIFNSCMSAGHSLNMDGYEACFSYFLINHMTCSVMEQLQMTARLRNNNSKTLYWGLMNTMNDPLRGIRDIEELKTYSTMMRKFGKWMGSSFDNGIKGFKILLKMAYPNIVFEKGVVKSREYPYKNNEIINQTMQNDASVLRKLFINPEPSKWRFVTQEHEALYGKDLPPRQFNYYSTLSGLYNVVLS</sequence>
<organism>
    <name type="scientific">Ostreid herpesvirus 1 (isolate France)</name>
    <name type="common">OsHV-1</name>
    <name type="synonym">Pacific oyster herpesvirus</name>
    <dbReference type="NCBI Taxonomy" id="654903"/>
    <lineage>
        <taxon>Viruses</taxon>
        <taxon>Duplodnaviria</taxon>
        <taxon>Heunggongvirae</taxon>
        <taxon>Peploviricota</taxon>
        <taxon>Herviviricetes</taxon>
        <taxon>Herpesvirales</taxon>
        <taxon>Malacoherpesviridae</taxon>
        <taxon>Ostreavirus</taxon>
        <taxon>Ostreavirus ostreidmalaco1</taxon>
        <taxon>Ostreid herpesvirus 1</taxon>
    </lineage>
</organism>